<keyword id="KW-0028">Amino-acid biosynthesis</keyword>
<keyword id="KW-0963">Cytoplasm</keyword>
<keyword id="KW-0220">Diaminopimelate biosynthesis</keyword>
<keyword id="KW-0457">Lysine biosynthesis</keyword>
<keyword id="KW-0520">NAD</keyword>
<keyword id="KW-0521">NADP</keyword>
<keyword id="KW-0560">Oxidoreductase</keyword>
<dbReference type="EC" id="1.17.1.8" evidence="1"/>
<dbReference type="EMBL" id="CP000026">
    <property type="protein sequence ID" value="AAV76100.1"/>
    <property type="molecule type" value="Genomic_DNA"/>
</dbReference>
<dbReference type="RefSeq" id="WP_000544033.1">
    <property type="nucleotide sequence ID" value="NC_006511.1"/>
</dbReference>
<dbReference type="SMR" id="Q5PIL9"/>
<dbReference type="KEGG" id="spt:SPA0065"/>
<dbReference type="HOGENOM" id="CLU_047479_2_1_6"/>
<dbReference type="UniPathway" id="UPA00034">
    <property type="reaction ID" value="UER00018"/>
</dbReference>
<dbReference type="Proteomes" id="UP000008185">
    <property type="component" value="Chromosome"/>
</dbReference>
<dbReference type="GO" id="GO:0005829">
    <property type="term" value="C:cytosol"/>
    <property type="evidence" value="ECO:0007669"/>
    <property type="project" value="TreeGrafter"/>
</dbReference>
<dbReference type="GO" id="GO:0008839">
    <property type="term" value="F:4-hydroxy-tetrahydrodipicolinate reductase"/>
    <property type="evidence" value="ECO:0007669"/>
    <property type="project" value="UniProtKB-EC"/>
</dbReference>
<dbReference type="GO" id="GO:0051287">
    <property type="term" value="F:NAD binding"/>
    <property type="evidence" value="ECO:0007669"/>
    <property type="project" value="UniProtKB-UniRule"/>
</dbReference>
<dbReference type="GO" id="GO:0050661">
    <property type="term" value="F:NADP binding"/>
    <property type="evidence" value="ECO:0007669"/>
    <property type="project" value="UniProtKB-UniRule"/>
</dbReference>
<dbReference type="GO" id="GO:0016726">
    <property type="term" value="F:oxidoreductase activity, acting on CH or CH2 groups, NAD or NADP as acceptor"/>
    <property type="evidence" value="ECO:0007669"/>
    <property type="project" value="UniProtKB-UniRule"/>
</dbReference>
<dbReference type="GO" id="GO:0019877">
    <property type="term" value="P:diaminopimelate biosynthetic process"/>
    <property type="evidence" value="ECO:0007669"/>
    <property type="project" value="UniProtKB-UniRule"/>
</dbReference>
<dbReference type="GO" id="GO:0009089">
    <property type="term" value="P:lysine biosynthetic process via diaminopimelate"/>
    <property type="evidence" value="ECO:0007669"/>
    <property type="project" value="UniProtKB-UniRule"/>
</dbReference>
<dbReference type="CDD" id="cd02274">
    <property type="entry name" value="DHDPR_N"/>
    <property type="match status" value="1"/>
</dbReference>
<dbReference type="FunFam" id="3.30.360.10:FF:000004">
    <property type="entry name" value="4-hydroxy-tetrahydrodipicolinate reductase"/>
    <property type="match status" value="1"/>
</dbReference>
<dbReference type="FunFam" id="3.40.50.720:FF:000048">
    <property type="entry name" value="4-hydroxy-tetrahydrodipicolinate reductase"/>
    <property type="match status" value="1"/>
</dbReference>
<dbReference type="Gene3D" id="3.30.360.10">
    <property type="entry name" value="Dihydrodipicolinate Reductase, domain 2"/>
    <property type="match status" value="1"/>
</dbReference>
<dbReference type="Gene3D" id="3.40.50.720">
    <property type="entry name" value="NAD(P)-binding Rossmann-like Domain"/>
    <property type="match status" value="1"/>
</dbReference>
<dbReference type="HAMAP" id="MF_00102">
    <property type="entry name" value="DapB"/>
    <property type="match status" value="1"/>
</dbReference>
<dbReference type="InterPro" id="IPR022663">
    <property type="entry name" value="DapB_C"/>
</dbReference>
<dbReference type="InterPro" id="IPR000846">
    <property type="entry name" value="DapB_N"/>
</dbReference>
<dbReference type="InterPro" id="IPR022664">
    <property type="entry name" value="DapB_N_CS"/>
</dbReference>
<dbReference type="InterPro" id="IPR023940">
    <property type="entry name" value="DHDPR_bac"/>
</dbReference>
<dbReference type="InterPro" id="IPR036291">
    <property type="entry name" value="NAD(P)-bd_dom_sf"/>
</dbReference>
<dbReference type="NCBIfam" id="TIGR00036">
    <property type="entry name" value="dapB"/>
    <property type="match status" value="1"/>
</dbReference>
<dbReference type="PANTHER" id="PTHR20836:SF0">
    <property type="entry name" value="4-HYDROXY-TETRAHYDRODIPICOLINATE REDUCTASE 1, CHLOROPLASTIC-RELATED"/>
    <property type="match status" value="1"/>
</dbReference>
<dbReference type="PANTHER" id="PTHR20836">
    <property type="entry name" value="DIHYDRODIPICOLINATE REDUCTASE"/>
    <property type="match status" value="1"/>
</dbReference>
<dbReference type="Pfam" id="PF05173">
    <property type="entry name" value="DapB_C"/>
    <property type="match status" value="1"/>
</dbReference>
<dbReference type="Pfam" id="PF01113">
    <property type="entry name" value="DapB_N"/>
    <property type="match status" value="1"/>
</dbReference>
<dbReference type="PIRSF" id="PIRSF000161">
    <property type="entry name" value="DHPR"/>
    <property type="match status" value="1"/>
</dbReference>
<dbReference type="SUPFAM" id="SSF55347">
    <property type="entry name" value="Glyceraldehyde-3-phosphate dehydrogenase-like, C-terminal domain"/>
    <property type="match status" value="1"/>
</dbReference>
<dbReference type="SUPFAM" id="SSF51735">
    <property type="entry name" value="NAD(P)-binding Rossmann-fold domains"/>
    <property type="match status" value="1"/>
</dbReference>
<dbReference type="PROSITE" id="PS01298">
    <property type="entry name" value="DAPB"/>
    <property type="match status" value="1"/>
</dbReference>
<feature type="chain" id="PRO_0000228385" description="4-hydroxy-tetrahydrodipicolinate reductase">
    <location>
        <begin position="1"/>
        <end position="273"/>
    </location>
</feature>
<feature type="active site" description="Proton donor/acceptor" evidence="1">
    <location>
        <position position="159"/>
    </location>
</feature>
<feature type="active site" description="Proton donor" evidence="1">
    <location>
        <position position="163"/>
    </location>
</feature>
<feature type="binding site" evidence="1">
    <location>
        <begin position="12"/>
        <end position="17"/>
    </location>
    <ligand>
        <name>NAD(+)</name>
        <dbReference type="ChEBI" id="CHEBI:57540"/>
    </ligand>
</feature>
<feature type="binding site" evidence="1">
    <location>
        <position position="38"/>
    </location>
    <ligand>
        <name>NAD(+)</name>
        <dbReference type="ChEBI" id="CHEBI:57540"/>
    </ligand>
</feature>
<feature type="binding site" evidence="1">
    <location>
        <position position="39"/>
    </location>
    <ligand>
        <name>NADP(+)</name>
        <dbReference type="ChEBI" id="CHEBI:58349"/>
    </ligand>
</feature>
<feature type="binding site" evidence="1">
    <location>
        <begin position="102"/>
        <end position="104"/>
    </location>
    <ligand>
        <name>NAD(+)</name>
        <dbReference type="ChEBI" id="CHEBI:57540"/>
    </ligand>
</feature>
<feature type="binding site" evidence="1">
    <location>
        <begin position="126"/>
        <end position="129"/>
    </location>
    <ligand>
        <name>NAD(+)</name>
        <dbReference type="ChEBI" id="CHEBI:57540"/>
    </ligand>
</feature>
<feature type="binding site" evidence="1">
    <location>
        <position position="160"/>
    </location>
    <ligand>
        <name>(S)-2,3,4,5-tetrahydrodipicolinate</name>
        <dbReference type="ChEBI" id="CHEBI:16845"/>
    </ligand>
</feature>
<feature type="binding site" evidence="1">
    <location>
        <begin position="169"/>
        <end position="170"/>
    </location>
    <ligand>
        <name>(S)-2,3,4,5-tetrahydrodipicolinate</name>
        <dbReference type="ChEBI" id="CHEBI:16845"/>
    </ligand>
</feature>
<proteinExistence type="inferred from homology"/>
<name>DAPB_SALPA</name>
<comment type="function">
    <text evidence="1">Catalyzes the conversion of 4-hydroxy-tetrahydrodipicolinate (HTPA) to tetrahydrodipicolinate.</text>
</comment>
<comment type="catalytic activity">
    <reaction evidence="1">
        <text>(S)-2,3,4,5-tetrahydrodipicolinate + NAD(+) + H2O = (2S,4S)-4-hydroxy-2,3,4,5-tetrahydrodipicolinate + NADH + H(+)</text>
        <dbReference type="Rhea" id="RHEA:35323"/>
        <dbReference type="ChEBI" id="CHEBI:15377"/>
        <dbReference type="ChEBI" id="CHEBI:15378"/>
        <dbReference type="ChEBI" id="CHEBI:16845"/>
        <dbReference type="ChEBI" id="CHEBI:57540"/>
        <dbReference type="ChEBI" id="CHEBI:57945"/>
        <dbReference type="ChEBI" id="CHEBI:67139"/>
        <dbReference type="EC" id="1.17.1.8"/>
    </reaction>
</comment>
<comment type="catalytic activity">
    <reaction evidence="1">
        <text>(S)-2,3,4,5-tetrahydrodipicolinate + NADP(+) + H2O = (2S,4S)-4-hydroxy-2,3,4,5-tetrahydrodipicolinate + NADPH + H(+)</text>
        <dbReference type="Rhea" id="RHEA:35331"/>
        <dbReference type="ChEBI" id="CHEBI:15377"/>
        <dbReference type="ChEBI" id="CHEBI:15378"/>
        <dbReference type="ChEBI" id="CHEBI:16845"/>
        <dbReference type="ChEBI" id="CHEBI:57783"/>
        <dbReference type="ChEBI" id="CHEBI:58349"/>
        <dbReference type="ChEBI" id="CHEBI:67139"/>
        <dbReference type="EC" id="1.17.1.8"/>
    </reaction>
</comment>
<comment type="pathway">
    <text evidence="1">Amino-acid biosynthesis; L-lysine biosynthesis via DAP pathway; (S)-tetrahydrodipicolinate from L-aspartate: step 4/4.</text>
</comment>
<comment type="subunit">
    <text evidence="1">Homotetramer.</text>
</comment>
<comment type="subcellular location">
    <subcellularLocation>
        <location evidence="1">Cytoplasm</location>
    </subcellularLocation>
</comment>
<comment type="similarity">
    <text evidence="1">Belongs to the DapB family.</text>
</comment>
<comment type="caution">
    <text evidence="2">Was originally thought to be a dihydrodipicolinate reductase (DHDPR), catalyzing the conversion of dihydrodipicolinate to tetrahydrodipicolinate. However, it was shown in E.coli that the substrate of the enzymatic reaction is not dihydrodipicolinate (DHDP) but in fact (2S,4S)-4-hydroxy-2,3,4,5-tetrahydrodipicolinic acid (HTPA), the product released by the DapA-catalyzed reaction.</text>
</comment>
<evidence type="ECO:0000255" key="1">
    <source>
        <dbReference type="HAMAP-Rule" id="MF_00102"/>
    </source>
</evidence>
<evidence type="ECO:0000305" key="2"/>
<reference key="1">
    <citation type="journal article" date="2004" name="Nat. Genet.">
        <title>Comparison of genome degradation in Paratyphi A and Typhi, human-restricted serovars of Salmonella enterica that cause typhoid.</title>
        <authorList>
            <person name="McClelland M."/>
            <person name="Sanderson K.E."/>
            <person name="Clifton S.W."/>
            <person name="Latreille P."/>
            <person name="Porwollik S."/>
            <person name="Sabo A."/>
            <person name="Meyer R."/>
            <person name="Bieri T."/>
            <person name="Ozersky P."/>
            <person name="McLellan M."/>
            <person name="Harkins C.R."/>
            <person name="Wang C."/>
            <person name="Nguyen C."/>
            <person name="Berghoff A."/>
            <person name="Elliott G."/>
            <person name="Kohlberg S."/>
            <person name="Strong C."/>
            <person name="Du F."/>
            <person name="Carter J."/>
            <person name="Kremizki C."/>
            <person name="Layman D."/>
            <person name="Leonard S."/>
            <person name="Sun H."/>
            <person name="Fulton L."/>
            <person name="Nash W."/>
            <person name="Miner T."/>
            <person name="Minx P."/>
            <person name="Delehaunty K."/>
            <person name="Fronick C."/>
            <person name="Magrini V."/>
            <person name="Nhan M."/>
            <person name="Warren W."/>
            <person name="Florea L."/>
            <person name="Spieth J."/>
            <person name="Wilson R.K."/>
        </authorList>
    </citation>
    <scope>NUCLEOTIDE SEQUENCE [LARGE SCALE GENOMIC DNA]</scope>
    <source>
        <strain>ATCC 9150 / SARB42</strain>
    </source>
</reference>
<organism>
    <name type="scientific">Salmonella paratyphi A (strain ATCC 9150 / SARB42)</name>
    <dbReference type="NCBI Taxonomy" id="295319"/>
    <lineage>
        <taxon>Bacteria</taxon>
        <taxon>Pseudomonadati</taxon>
        <taxon>Pseudomonadota</taxon>
        <taxon>Gammaproteobacteria</taxon>
        <taxon>Enterobacterales</taxon>
        <taxon>Enterobacteriaceae</taxon>
        <taxon>Salmonella</taxon>
    </lineage>
</organism>
<accession>Q5PIL9</accession>
<gene>
    <name evidence="1" type="primary">dapB</name>
    <name type="ordered locus">SPA0065</name>
</gene>
<protein>
    <recommendedName>
        <fullName evidence="1">4-hydroxy-tetrahydrodipicolinate reductase</fullName>
        <shortName evidence="1">HTPA reductase</shortName>
        <ecNumber evidence="1">1.17.1.8</ecNumber>
    </recommendedName>
</protein>
<sequence>MHEAQIRVAIAGAGGRMGRQLIQAAMAMEGVQLGAALEREGSSLLGSDAGELAGAGKSGVIVQSSLEAVKDDFDVFIDFTRPEGTLTHLAFCRQHGKGMVIGTTGFDDAGKQAIREASQEIAIVFAANFSVGVNVMLKLLEKAAKVMGYYSDIEIIEAHHRHKVDAPSGTALEMGEAIAGALDKNLKDCAVYSREGYTGERVPGTIGFATVRAGDIVGEHTAMFADIGERVEITHKASSRMTFANGALRAALWLKTKKNGLFDMRDVLGLDVL</sequence>